<dbReference type="EC" id="2.8.1.1"/>
<dbReference type="EMBL" id="AE000516">
    <property type="protein sequence ID" value="AAK47725.1"/>
    <property type="molecule type" value="Genomic_DNA"/>
</dbReference>
<dbReference type="PIR" id="D70980">
    <property type="entry name" value="D70980"/>
</dbReference>
<dbReference type="RefSeq" id="WP_003417149.1">
    <property type="nucleotide sequence ID" value="NZ_KK341227.1"/>
</dbReference>
<dbReference type="SMR" id="P9WHF6"/>
<dbReference type="KEGG" id="mtc:MT3382"/>
<dbReference type="PATRIC" id="fig|83331.31.peg.3640"/>
<dbReference type="HOGENOM" id="CLU_031618_1_3_11"/>
<dbReference type="Proteomes" id="UP000001020">
    <property type="component" value="Chromosome"/>
</dbReference>
<dbReference type="GO" id="GO:0004792">
    <property type="term" value="F:thiosulfate-cyanide sulfurtransferase activity"/>
    <property type="evidence" value="ECO:0007669"/>
    <property type="project" value="UniProtKB-EC"/>
</dbReference>
<dbReference type="CDD" id="cd01448">
    <property type="entry name" value="TST_Repeat_1"/>
    <property type="match status" value="1"/>
</dbReference>
<dbReference type="CDD" id="cd01449">
    <property type="entry name" value="TST_Repeat_2"/>
    <property type="match status" value="1"/>
</dbReference>
<dbReference type="FunFam" id="3.40.250.10:FF:000024">
    <property type="entry name" value="Sulfurtransferase"/>
    <property type="match status" value="1"/>
</dbReference>
<dbReference type="FunFam" id="3.40.250.10:FF:000028">
    <property type="entry name" value="Sulfurtransferase"/>
    <property type="match status" value="1"/>
</dbReference>
<dbReference type="Gene3D" id="3.40.250.10">
    <property type="entry name" value="Rhodanese-like domain"/>
    <property type="match status" value="2"/>
</dbReference>
<dbReference type="InterPro" id="IPR001763">
    <property type="entry name" value="Rhodanese-like_dom"/>
</dbReference>
<dbReference type="InterPro" id="IPR036873">
    <property type="entry name" value="Rhodanese-like_dom_sf"/>
</dbReference>
<dbReference type="InterPro" id="IPR051126">
    <property type="entry name" value="Thiosulfate_sulfurtransferase"/>
</dbReference>
<dbReference type="InterPro" id="IPR001307">
    <property type="entry name" value="Thiosulphate_STrfase_CS"/>
</dbReference>
<dbReference type="PANTHER" id="PTHR43855">
    <property type="entry name" value="THIOSULFATE SULFURTRANSFERASE"/>
    <property type="match status" value="1"/>
</dbReference>
<dbReference type="PANTHER" id="PTHR43855:SF1">
    <property type="entry name" value="THIOSULFATE SULFURTRANSFERASE"/>
    <property type="match status" value="1"/>
</dbReference>
<dbReference type="Pfam" id="PF00581">
    <property type="entry name" value="Rhodanese"/>
    <property type="match status" value="2"/>
</dbReference>
<dbReference type="SMART" id="SM00450">
    <property type="entry name" value="RHOD"/>
    <property type="match status" value="2"/>
</dbReference>
<dbReference type="SUPFAM" id="SSF52821">
    <property type="entry name" value="Rhodanese/Cell cycle control phosphatase"/>
    <property type="match status" value="2"/>
</dbReference>
<dbReference type="PROSITE" id="PS00380">
    <property type="entry name" value="RHODANESE_1"/>
    <property type="match status" value="1"/>
</dbReference>
<dbReference type="PROSITE" id="PS00683">
    <property type="entry name" value="RHODANESE_2"/>
    <property type="match status" value="1"/>
</dbReference>
<dbReference type="PROSITE" id="PS50206">
    <property type="entry name" value="RHODANESE_3"/>
    <property type="match status" value="2"/>
</dbReference>
<proteinExistence type="inferred from homology"/>
<reference key="1">
    <citation type="journal article" date="2002" name="J. Bacteriol.">
        <title>Whole-genome comparison of Mycobacterium tuberculosis clinical and laboratory strains.</title>
        <authorList>
            <person name="Fleischmann R.D."/>
            <person name="Alland D."/>
            <person name="Eisen J.A."/>
            <person name="Carpenter L."/>
            <person name="White O."/>
            <person name="Peterson J.D."/>
            <person name="DeBoy R.T."/>
            <person name="Dodson R.J."/>
            <person name="Gwinn M.L."/>
            <person name="Haft D.H."/>
            <person name="Hickey E.K."/>
            <person name="Kolonay J.F."/>
            <person name="Nelson W.C."/>
            <person name="Umayam L.A."/>
            <person name="Ermolaeva M.D."/>
            <person name="Salzberg S.L."/>
            <person name="Delcher A."/>
            <person name="Utterback T.R."/>
            <person name="Weidman J.F."/>
            <person name="Khouri H.M."/>
            <person name="Gill J."/>
            <person name="Mikula A."/>
            <person name="Bishai W."/>
            <person name="Jacobs W.R. Jr."/>
            <person name="Venter J.C."/>
            <person name="Fraser C.M."/>
        </authorList>
    </citation>
    <scope>NUCLEOTIDE SEQUENCE [LARGE SCALE GENOMIC DNA]</scope>
    <source>
        <strain>CDC 1551 / Oshkosh</strain>
    </source>
</reference>
<sequence>MPLPADPSPTLSAYAHPERLVTADWLSAHMGAPGLAIVESDEDVLLYDVGHIPGAVKIDWHTDLNDPRVRDYINGEQFAELMDRKGIARDDTVVIYGDKSNWWAAYALWVFTLFGHADVRLLNGGRDLWLAERRETTLDVPTKTCTGYPVVQRNDAPIRAFRDDVLAILGAQPLIDVRSPEEYTGKRTHMPDYPEEGALRAGHIPTAVHIPWGKAADESGRFRSREELERLYDFINPDDQTVVYCRIGERSSHTWFVLTHLLGKADVRNYDGSWTEWGNAVRVPIVAGEEPGVVPVV</sequence>
<accession>P9WHF6</accession>
<accession>L0TC30</accession>
<accession>P96888</accession>
<protein>
    <recommendedName>
        <fullName>Putative thiosulfate sulfurtransferase SseA</fullName>
        <ecNumber>2.8.1.1</ecNumber>
    </recommendedName>
</protein>
<comment type="catalytic activity">
    <reaction>
        <text>thiosulfate + hydrogen cyanide = thiocyanate + sulfite + 2 H(+)</text>
        <dbReference type="Rhea" id="RHEA:16881"/>
        <dbReference type="ChEBI" id="CHEBI:15378"/>
        <dbReference type="ChEBI" id="CHEBI:17359"/>
        <dbReference type="ChEBI" id="CHEBI:18022"/>
        <dbReference type="ChEBI" id="CHEBI:18407"/>
        <dbReference type="ChEBI" id="CHEBI:33542"/>
        <dbReference type="EC" id="2.8.1.1"/>
    </reaction>
</comment>
<comment type="domain">
    <text evidence="1">Contains two rhodanese domains with different primary structures but with near identical secondary structure conformations suggesting a common evolutionary origin. Only the C-terminal rhodanese domain contains the catalytic cysteine residue (By similarity).</text>
</comment>
<organism>
    <name type="scientific">Mycobacterium tuberculosis (strain CDC 1551 / Oshkosh)</name>
    <dbReference type="NCBI Taxonomy" id="83331"/>
    <lineage>
        <taxon>Bacteria</taxon>
        <taxon>Bacillati</taxon>
        <taxon>Actinomycetota</taxon>
        <taxon>Actinomycetes</taxon>
        <taxon>Mycobacteriales</taxon>
        <taxon>Mycobacteriaceae</taxon>
        <taxon>Mycobacterium</taxon>
        <taxon>Mycobacterium tuberculosis complex</taxon>
    </lineage>
</organism>
<keyword id="KW-1185">Reference proteome</keyword>
<keyword id="KW-0677">Repeat</keyword>
<keyword id="KW-0808">Transferase</keyword>
<feature type="chain" id="PRO_0000428195" description="Putative thiosulfate sulfurtransferase SseA">
    <location>
        <begin position="1"/>
        <end position="297"/>
    </location>
</feature>
<feature type="domain" description="Rhodanese 1" evidence="2">
    <location>
        <begin position="31"/>
        <end position="138"/>
    </location>
</feature>
<feature type="domain" description="Rhodanese 2" evidence="2">
    <location>
        <begin position="168"/>
        <end position="286"/>
    </location>
</feature>
<feature type="active site" description="Cysteine persulfide intermediate" evidence="2">
    <location>
        <position position="245"/>
    </location>
</feature>
<feature type="binding site" evidence="1">
    <location>
        <position position="250"/>
    </location>
    <ligand>
        <name>substrate</name>
    </ligand>
</feature>
<name>THT2_MYCTO</name>
<evidence type="ECO:0000250" key="1"/>
<evidence type="ECO:0000255" key="2">
    <source>
        <dbReference type="PROSITE-ProRule" id="PRU00173"/>
    </source>
</evidence>
<gene>
    <name type="primary">sseA</name>
    <name type="ordered locus">MT3382</name>
</gene>